<keyword id="KW-0007">Acetylation</keyword>
<keyword id="KW-0119">Carbohydrate metabolism</keyword>
<keyword id="KW-0313">Glucose metabolism</keyword>
<keyword id="KW-0378">Hydrolase</keyword>
<keyword id="KW-1185">Reference proteome</keyword>
<feature type="chain" id="PRO_1000148169" description="6-phosphogluconolactonase">
    <location>
        <begin position="1"/>
        <end position="331"/>
    </location>
</feature>
<feature type="modified residue" description="N6-acetyllysine" evidence="1">
    <location>
        <position position="287"/>
    </location>
</feature>
<protein>
    <recommendedName>
        <fullName evidence="1">6-phosphogluconolactonase</fullName>
        <shortName evidence="1">6-P-gluconolactonase</shortName>
        <ecNumber evidence="1">3.1.1.31</ecNumber>
    </recommendedName>
</protein>
<reference key="1">
    <citation type="submission" date="2008-05" db="EMBL/GenBank/DDBJ databases">
        <title>Complete sequence of Shigella boydii serotype 18 strain BS512.</title>
        <authorList>
            <person name="Rasko D.A."/>
            <person name="Rosovitz M."/>
            <person name="Maurelli A.T."/>
            <person name="Myers G."/>
            <person name="Seshadri R."/>
            <person name="Cer R."/>
            <person name="Jiang L."/>
            <person name="Ravel J."/>
            <person name="Sebastian Y."/>
        </authorList>
    </citation>
    <scope>NUCLEOTIDE SEQUENCE [LARGE SCALE GENOMIC DNA]</scope>
    <source>
        <strain>CDC 3083-94 / BS512</strain>
    </source>
</reference>
<name>6PGL_SHIB3</name>
<proteinExistence type="inferred from homology"/>
<gene>
    <name evidence="1" type="primary">pgl</name>
    <name type="ordered locus">SbBS512_E2591</name>
</gene>
<organism>
    <name type="scientific">Shigella boydii serotype 18 (strain CDC 3083-94 / BS512)</name>
    <dbReference type="NCBI Taxonomy" id="344609"/>
    <lineage>
        <taxon>Bacteria</taxon>
        <taxon>Pseudomonadati</taxon>
        <taxon>Pseudomonadota</taxon>
        <taxon>Gammaproteobacteria</taxon>
        <taxon>Enterobacterales</taxon>
        <taxon>Enterobacteriaceae</taxon>
        <taxon>Shigella</taxon>
    </lineage>
</organism>
<dbReference type="EC" id="3.1.1.31" evidence="1"/>
<dbReference type="EMBL" id="CP001063">
    <property type="protein sequence ID" value="ACD09764.1"/>
    <property type="molecule type" value="Genomic_DNA"/>
</dbReference>
<dbReference type="RefSeq" id="WP_000815426.1">
    <property type="nucleotide sequence ID" value="NC_010658.1"/>
</dbReference>
<dbReference type="SMR" id="B2TVG3"/>
<dbReference type="STRING" id="344609.SbBS512_E2591"/>
<dbReference type="KEGG" id="sbc:SbBS512_E2591"/>
<dbReference type="HOGENOM" id="CLU_038716_2_0_6"/>
<dbReference type="UniPathway" id="UPA00115">
    <property type="reaction ID" value="UER00409"/>
</dbReference>
<dbReference type="Proteomes" id="UP000001030">
    <property type="component" value="Chromosome"/>
</dbReference>
<dbReference type="GO" id="GO:0005829">
    <property type="term" value="C:cytosol"/>
    <property type="evidence" value="ECO:0007669"/>
    <property type="project" value="TreeGrafter"/>
</dbReference>
<dbReference type="GO" id="GO:0017057">
    <property type="term" value="F:6-phosphogluconolactonase activity"/>
    <property type="evidence" value="ECO:0007669"/>
    <property type="project" value="UniProtKB-UniRule"/>
</dbReference>
<dbReference type="GO" id="GO:0006006">
    <property type="term" value="P:glucose metabolic process"/>
    <property type="evidence" value="ECO:0007669"/>
    <property type="project" value="UniProtKB-KW"/>
</dbReference>
<dbReference type="GO" id="GO:0009051">
    <property type="term" value="P:pentose-phosphate shunt, oxidative branch"/>
    <property type="evidence" value="ECO:0007669"/>
    <property type="project" value="UniProtKB-UniRule"/>
</dbReference>
<dbReference type="FunFam" id="2.130.10.10:FF:000051">
    <property type="entry name" value="6-phosphogluconolactonase"/>
    <property type="match status" value="1"/>
</dbReference>
<dbReference type="Gene3D" id="2.130.10.10">
    <property type="entry name" value="YVTN repeat-like/Quinoprotein amine dehydrogenase"/>
    <property type="match status" value="1"/>
</dbReference>
<dbReference type="HAMAP" id="MF_01605">
    <property type="entry name" value="6P_gluconolactonase"/>
    <property type="match status" value="1"/>
</dbReference>
<dbReference type="InterPro" id="IPR022528">
    <property type="entry name" value="6-phosphogluconolactonase_YbhE"/>
</dbReference>
<dbReference type="InterPro" id="IPR050282">
    <property type="entry name" value="Cycloisomerase_2"/>
</dbReference>
<dbReference type="InterPro" id="IPR019405">
    <property type="entry name" value="Lactonase_7-beta_prop"/>
</dbReference>
<dbReference type="InterPro" id="IPR011045">
    <property type="entry name" value="N2O_reductase_N"/>
</dbReference>
<dbReference type="InterPro" id="IPR015943">
    <property type="entry name" value="WD40/YVTN_repeat-like_dom_sf"/>
</dbReference>
<dbReference type="NCBIfam" id="NF008258">
    <property type="entry name" value="PRK11028.1"/>
    <property type="match status" value="1"/>
</dbReference>
<dbReference type="PANTHER" id="PTHR30344:SF1">
    <property type="entry name" value="6-PHOSPHOGLUCONOLACTONASE"/>
    <property type="match status" value="1"/>
</dbReference>
<dbReference type="PANTHER" id="PTHR30344">
    <property type="entry name" value="6-PHOSPHOGLUCONOLACTONASE-RELATED"/>
    <property type="match status" value="1"/>
</dbReference>
<dbReference type="Pfam" id="PF10282">
    <property type="entry name" value="Lactonase"/>
    <property type="match status" value="1"/>
</dbReference>
<dbReference type="SUPFAM" id="SSF50974">
    <property type="entry name" value="Nitrous oxide reductase, N-terminal domain"/>
    <property type="match status" value="1"/>
</dbReference>
<comment type="function">
    <text evidence="1">Catalyzes the hydrolysis of 6-phosphogluconolactone to 6-phosphogluconate.</text>
</comment>
<comment type="catalytic activity">
    <reaction evidence="1">
        <text>6-phospho-D-glucono-1,5-lactone + H2O = 6-phospho-D-gluconate + H(+)</text>
        <dbReference type="Rhea" id="RHEA:12556"/>
        <dbReference type="ChEBI" id="CHEBI:15377"/>
        <dbReference type="ChEBI" id="CHEBI:15378"/>
        <dbReference type="ChEBI" id="CHEBI:57955"/>
        <dbReference type="ChEBI" id="CHEBI:58759"/>
        <dbReference type="EC" id="3.1.1.31"/>
    </reaction>
</comment>
<comment type="pathway">
    <text evidence="1">Carbohydrate degradation; pentose phosphate pathway; D-ribulose 5-phosphate from D-glucose 6-phosphate (oxidative stage): step 2/3.</text>
</comment>
<comment type="similarity">
    <text evidence="1">Belongs to the cycloisomerase 2 family.</text>
</comment>
<evidence type="ECO:0000255" key="1">
    <source>
        <dbReference type="HAMAP-Rule" id="MF_01605"/>
    </source>
</evidence>
<accession>B2TVG3</accession>
<sequence>MKQTVYIASPESQQIHVWNLNHEGALTLTQVVDVPGQVQPMVVSPDKRYLYVGVRPEFRVLAYRIAPDDGALTFAAESALPGSPTHISTDHQGQFVFVGSYNAGNVSVTRLEDGLPVGVVDVVEGLDGCHSANISPDNRTLWVPALKQDRICLFTVSDDGHLVAQDPAEVTTIEGAGPRHMVFHPNEQYAYCVNELNSSVDVWELKDPHGNIECVQTLDIMPENFSDTRWAADIHITPDGRHLYACDRTASLITVFSVSEDGSVLSKEGFQPTETQPRGFNVDHSGKYLIAAGQKSHLISVYEIVGEQGLLHEKGRYAVGQGPMWVVVNAH</sequence>